<keyword id="KW-0963">Cytoplasm</keyword>
<keyword id="KW-0488">Methylation</keyword>
<keyword id="KW-0648">Protein biosynthesis</keyword>
<reference key="1">
    <citation type="journal article" date="2003" name="Mol. Microbiol.">
        <title>Genome-based analysis of virulence genes in a non-biofilm-forming Staphylococcus epidermidis strain (ATCC 12228).</title>
        <authorList>
            <person name="Zhang Y.-Q."/>
            <person name="Ren S.-X."/>
            <person name="Li H.-L."/>
            <person name="Wang Y.-X."/>
            <person name="Fu G."/>
            <person name="Yang J."/>
            <person name="Qin Z.-Q."/>
            <person name="Miao Y.-G."/>
            <person name="Wang W.-Y."/>
            <person name="Chen R.-S."/>
            <person name="Shen Y."/>
            <person name="Chen Z."/>
            <person name="Yuan Z.-H."/>
            <person name="Zhao G.-P."/>
            <person name="Qu D."/>
            <person name="Danchin A."/>
            <person name="Wen Y.-M."/>
        </authorList>
    </citation>
    <scope>NUCLEOTIDE SEQUENCE [LARGE SCALE GENOMIC DNA]</scope>
    <source>
        <strain>ATCC 12228 / FDA PCI 1200</strain>
    </source>
</reference>
<sequence>MFDQLDIVEERYEQLNELLSDPDVVNDADKLRKYSKEQADLQKTVDVYRSYKTKKEELQDIEDMLNETSDKEEVEMLKEESSALKTELPDMEEELKILLIPKDPNDDKDVIVEIRAAAGGDEAAIFAGDLMRMYSKYAEANGFKTEIVEASESDHGGYKEVSFSVSGTGAYSKLKFENGAHRVQRVPETESGGRIHTSTATVAVLPEAEDVEIEIRNEDLKIDTYRSSGAGGQHVNTTDSAVRITHLPTGVIATSSEKSQIQNREKAMKVLKARLYDMKLQEEQQKYASQRKSAVGTGDRSERIRTYNYPQSRVTDHRIGLTLQKLNQIMEGNLDEIVEALTLSEQTEKLKELNNGEL</sequence>
<accession>Q8CNI7</accession>
<protein>
    <recommendedName>
        <fullName evidence="1">Peptide chain release factor 1</fullName>
        <shortName evidence="1">RF-1</shortName>
    </recommendedName>
</protein>
<dbReference type="EMBL" id="AE015929">
    <property type="protein sequence ID" value="AAO05315.1"/>
    <property type="molecule type" value="Genomic_DNA"/>
</dbReference>
<dbReference type="RefSeq" id="NP_765271.1">
    <property type="nucleotide sequence ID" value="NC_004461.1"/>
</dbReference>
<dbReference type="RefSeq" id="WP_001829940.1">
    <property type="nucleotide sequence ID" value="NZ_WBME01000021.1"/>
</dbReference>
<dbReference type="SMR" id="Q8CNI7"/>
<dbReference type="GeneID" id="50018184"/>
<dbReference type="KEGG" id="sep:SE_1716"/>
<dbReference type="PATRIC" id="fig|176280.10.peg.1676"/>
<dbReference type="eggNOG" id="COG0216">
    <property type="taxonomic scope" value="Bacteria"/>
</dbReference>
<dbReference type="HOGENOM" id="CLU_036856_0_1_9"/>
<dbReference type="OrthoDB" id="9806673at2"/>
<dbReference type="Proteomes" id="UP000001411">
    <property type="component" value="Chromosome"/>
</dbReference>
<dbReference type="GO" id="GO:0005737">
    <property type="term" value="C:cytoplasm"/>
    <property type="evidence" value="ECO:0007669"/>
    <property type="project" value="UniProtKB-SubCell"/>
</dbReference>
<dbReference type="GO" id="GO:0016149">
    <property type="term" value="F:translation release factor activity, codon specific"/>
    <property type="evidence" value="ECO:0007669"/>
    <property type="project" value="UniProtKB-UniRule"/>
</dbReference>
<dbReference type="FunFam" id="3.30.160.20:FF:000004">
    <property type="entry name" value="Peptide chain release factor 1"/>
    <property type="match status" value="1"/>
</dbReference>
<dbReference type="FunFam" id="3.30.70.1660:FF:000002">
    <property type="entry name" value="Peptide chain release factor 1"/>
    <property type="match status" value="1"/>
</dbReference>
<dbReference type="FunFam" id="3.30.70.1660:FF:000004">
    <property type="entry name" value="Peptide chain release factor 1"/>
    <property type="match status" value="1"/>
</dbReference>
<dbReference type="Gene3D" id="3.30.160.20">
    <property type="match status" value="1"/>
</dbReference>
<dbReference type="Gene3D" id="3.30.70.1660">
    <property type="match status" value="1"/>
</dbReference>
<dbReference type="Gene3D" id="6.10.140.1950">
    <property type="match status" value="1"/>
</dbReference>
<dbReference type="HAMAP" id="MF_00093">
    <property type="entry name" value="Rel_fac_1"/>
    <property type="match status" value="1"/>
</dbReference>
<dbReference type="InterPro" id="IPR005139">
    <property type="entry name" value="PCRF"/>
</dbReference>
<dbReference type="InterPro" id="IPR000352">
    <property type="entry name" value="Pep_chain_release_fac_I"/>
</dbReference>
<dbReference type="InterPro" id="IPR045853">
    <property type="entry name" value="Pep_chain_release_fac_I_sf"/>
</dbReference>
<dbReference type="InterPro" id="IPR050057">
    <property type="entry name" value="Prokaryotic/Mito_RF"/>
</dbReference>
<dbReference type="InterPro" id="IPR004373">
    <property type="entry name" value="RF-1"/>
</dbReference>
<dbReference type="NCBIfam" id="TIGR00019">
    <property type="entry name" value="prfA"/>
    <property type="match status" value="1"/>
</dbReference>
<dbReference type="NCBIfam" id="NF001859">
    <property type="entry name" value="PRK00591.1"/>
    <property type="match status" value="1"/>
</dbReference>
<dbReference type="PANTHER" id="PTHR43804">
    <property type="entry name" value="LD18447P"/>
    <property type="match status" value="1"/>
</dbReference>
<dbReference type="PANTHER" id="PTHR43804:SF7">
    <property type="entry name" value="LD18447P"/>
    <property type="match status" value="1"/>
</dbReference>
<dbReference type="Pfam" id="PF03462">
    <property type="entry name" value="PCRF"/>
    <property type="match status" value="1"/>
</dbReference>
<dbReference type="Pfam" id="PF00472">
    <property type="entry name" value="RF-1"/>
    <property type="match status" value="1"/>
</dbReference>
<dbReference type="SMART" id="SM00937">
    <property type="entry name" value="PCRF"/>
    <property type="match status" value="1"/>
</dbReference>
<dbReference type="SUPFAM" id="SSF75620">
    <property type="entry name" value="Release factor"/>
    <property type="match status" value="1"/>
</dbReference>
<dbReference type="PROSITE" id="PS00745">
    <property type="entry name" value="RF_PROK_I"/>
    <property type="match status" value="1"/>
</dbReference>
<organism>
    <name type="scientific">Staphylococcus epidermidis (strain ATCC 12228 / FDA PCI 1200)</name>
    <dbReference type="NCBI Taxonomy" id="176280"/>
    <lineage>
        <taxon>Bacteria</taxon>
        <taxon>Bacillati</taxon>
        <taxon>Bacillota</taxon>
        <taxon>Bacilli</taxon>
        <taxon>Bacillales</taxon>
        <taxon>Staphylococcaceae</taxon>
        <taxon>Staphylococcus</taxon>
    </lineage>
</organism>
<gene>
    <name evidence="1" type="primary">prfA</name>
    <name type="ordered locus">SE_1716</name>
</gene>
<feature type="chain" id="PRO_0000177743" description="Peptide chain release factor 1">
    <location>
        <begin position="1"/>
        <end position="358"/>
    </location>
</feature>
<feature type="modified residue" description="N5-methylglutamine" evidence="1">
    <location>
        <position position="233"/>
    </location>
</feature>
<comment type="function">
    <text evidence="1">Peptide chain release factor 1 directs the termination of translation in response to the peptide chain termination codons UAG and UAA.</text>
</comment>
<comment type="subcellular location">
    <subcellularLocation>
        <location evidence="1">Cytoplasm</location>
    </subcellularLocation>
</comment>
<comment type="PTM">
    <text evidence="1">Methylated by PrmC. Methylation increases the termination efficiency of RF1.</text>
</comment>
<comment type="similarity">
    <text evidence="1">Belongs to the prokaryotic/mitochondrial release factor family.</text>
</comment>
<name>RF1_STAES</name>
<proteinExistence type="inferred from homology"/>
<evidence type="ECO:0000255" key="1">
    <source>
        <dbReference type="HAMAP-Rule" id="MF_00093"/>
    </source>
</evidence>